<accession>P59795</accession>
<organism>
    <name type="scientific">Sphingomonas elodea</name>
    <dbReference type="NCBI Taxonomy" id="179878"/>
    <lineage>
        <taxon>Bacteria</taxon>
        <taxon>Pseudomonadati</taxon>
        <taxon>Pseudomonadota</taxon>
        <taxon>Alphaproteobacteria</taxon>
        <taxon>Sphingomonadales</taxon>
        <taxon>Sphingomonadaceae</taxon>
        <taxon>Sphingomonas</taxon>
    </lineage>
</organism>
<name>BPT_SPHEL</name>
<proteinExistence type="inferred from homology"/>
<gene>
    <name evidence="1" type="primary">bpt</name>
    <name type="synonym">ate1</name>
</gene>
<sequence length="260" mass="28745">MTALSRFPRFFVTSPSPCPYLPGRQERKIFTELSGQQAGELNDALSRIGFRRSQSVAYRPSCAGCTACVSVRVVTEGFQPNATQRKLLKRYGDLEVTACKPWATGEQYELLKRYLDSRHPGGGMAAMDESDYADMVEQSPVSSYVIEYREPSVNGERGRLVGACITDQQGDGLSMIYSYFVTDDEARPGMGNFIIMDHILRARAAGLPYVYLGYWVKGSARMAYKTRYRPIEVLGPTGWALLEDEDMVGAMPSAVAAALA</sequence>
<feature type="chain" id="PRO_0000195116" description="Aspartate/glutamate leucyltransferase">
    <location>
        <begin position="1"/>
        <end position="260"/>
    </location>
</feature>
<reference key="1">
    <citation type="journal article" date="2004" name="J. Ind. Microbiol. Biotechnol.">
        <title>Organization of genes required for gellan polysaccharide biosynthesis in Sphingomonas elodea ATCC 31461.</title>
        <authorList>
            <person name="Harding N.E."/>
            <person name="Patel Y.N."/>
            <person name="Coleman R.J."/>
        </authorList>
    </citation>
    <scope>NUCLEOTIDE SEQUENCE [GENOMIC DNA]</scope>
    <source>
        <strain>ATCC 31461 / PS-60</strain>
    </source>
</reference>
<dbReference type="EC" id="2.3.2.29" evidence="1"/>
<dbReference type="EMBL" id="AY220099">
    <property type="protein sequence ID" value="AAP46177.1"/>
    <property type="molecule type" value="Genomic_DNA"/>
</dbReference>
<dbReference type="SMR" id="P59795"/>
<dbReference type="STRING" id="1081640.GCA_000226955_01698"/>
<dbReference type="GO" id="GO:0005737">
    <property type="term" value="C:cytoplasm"/>
    <property type="evidence" value="ECO:0007669"/>
    <property type="project" value="UniProtKB-SubCell"/>
</dbReference>
<dbReference type="GO" id="GO:0004057">
    <property type="term" value="F:arginyl-tRNA--protein transferase activity"/>
    <property type="evidence" value="ECO:0007669"/>
    <property type="project" value="InterPro"/>
</dbReference>
<dbReference type="GO" id="GO:0008914">
    <property type="term" value="F:leucyl-tRNA--protein transferase activity"/>
    <property type="evidence" value="ECO:0007669"/>
    <property type="project" value="UniProtKB-UniRule"/>
</dbReference>
<dbReference type="GO" id="GO:0071596">
    <property type="term" value="P:ubiquitin-dependent protein catabolic process via the N-end rule pathway"/>
    <property type="evidence" value="ECO:0007669"/>
    <property type="project" value="InterPro"/>
</dbReference>
<dbReference type="HAMAP" id="MF_00689">
    <property type="entry name" value="Bpt"/>
    <property type="match status" value="1"/>
</dbReference>
<dbReference type="InterPro" id="IPR016181">
    <property type="entry name" value="Acyl_CoA_acyltransferase"/>
</dbReference>
<dbReference type="InterPro" id="IPR017138">
    <property type="entry name" value="Asp_Glu_LeuTrfase"/>
</dbReference>
<dbReference type="InterPro" id="IPR030700">
    <property type="entry name" value="N-end_Aminoacyl_Trfase"/>
</dbReference>
<dbReference type="InterPro" id="IPR007472">
    <property type="entry name" value="N-end_Aminoacyl_Trfase_C"/>
</dbReference>
<dbReference type="InterPro" id="IPR007471">
    <property type="entry name" value="N-end_Aminoacyl_Trfase_N"/>
</dbReference>
<dbReference type="NCBIfam" id="NF002343">
    <property type="entry name" value="PRK01305.1-4"/>
    <property type="match status" value="1"/>
</dbReference>
<dbReference type="PANTHER" id="PTHR21367">
    <property type="entry name" value="ARGININE-TRNA-PROTEIN TRANSFERASE 1"/>
    <property type="match status" value="1"/>
</dbReference>
<dbReference type="PANTHER" id="PTHR21367:SF1">
    <property type="entry name" value="ARGINYL-TRNA--PROTEIN TRANSFERASE 1"/>
    <property type="match status" value="1"/>
</dbReference>
<dbReference type="Pfam" id="PF04377">
    <property type="entry name" value="ATE_C"/>
    <property type="match status" value="1"/>
</dbReference>
<dbReference type="Pfam" id="PF04376">
    <property type="entry name" value="ATE_N"/>
    <property type="match status" value="1"/>
</dbReference>
<dbReference type="PIRSF" id="PIRSF037208">
    <property type="entry name" value="ATE_pro_prd"/>
    <property type="match status" value="1"/>
</dbReference>
<dbReference type="SUPFAM" id="SSF55729">
    <property type="entry name" value="Acyl-CoA N-acyltransferases (Nat)"/>
    <property type="match status" value="1"/>
</dbReference>
<keyword id="KW-0012">Acyltransferase</keyword>
<keyword id="KW-0963">Cytoplasm</keyword>
<keyword id="KW-0808">Transferase</keyword>
<comment type="function">
    <text evidence="1">Functions in the N-end rule pathway of protein degradation where it conjugates Leu from its aminoacyl-tRNA to the N-termini of proteins containing an N-terminal aspartate or glutamate.</text>
</comment>
<comment type="catalytic activity">
    <reaction evidence="1">
        <text>N-terminal L-glutamyl-[protein] + L-leucyl-tRNA(Leu) = N-terminal L-leucyl-L-glutamyl-[protein] + tRNA(Leu) + H(+)</text>
        <dbReference type="Rhea" id="RHEA:50412"/>
        <dbReference type="Rhea" id="RHEA-COMP:9613"/>
        <dbReference type="Rhea" id="RHEA-COMP:9622"/>
        <dbReference type="Rhea" id="RHEA-COMP:12664"/>
        <dbReference type="Rhea" id="RHEA-COMP:12668"/>
        <dbReference type="ChEBI" id="CHEBI:15378"/>
        <dbReference type="ChEBI" id="CHEBI:64721"/>
        <dbReference type="ChEBI" id="CHEBI:78442"/>
        <dbReference type="ChEBI" id="CHEBI:78494"/>
        <dbReference type="ChEBI" id="CHEBI:133041"/>
        <dbReference type="EC" id="2.3.2.29"/>
    </reaction>
</comment>
<comment type="catalytic activity">
    <reaction evidence="1">
        <text>N-terminal L-aspartyl-[protein] + L-leucyl-tRNA(Leu) = N-terminal L-leucyl-L-aspartyl-[protein] + tRNA(Leu) + H(+)</text>
        <dbReference type="Rhea" id="RHEA:50420"/>
        <dbReference type="Rhea" id="RHEA-COMP:9613"/>
        <dbReference type="Rhea" id="RHEA-COMP:9622"/>
        <dbReference type="Rhea" id="RHEA-COMP:12669"/>
        <dbReference type="Rhea" id="RHEA-COMP:12674"/>
        <dbReference type="ChEBI" id="CHEBI:15378"/>
        <dbReference type="ChEBI" id="CHEBI:64720"/>
        <dbReference type="ChEBI" id="CHEBI:78442"/>
        <dbReference type="ChEBI" id="CHEBI:78494"/>
        <dbReference type="ChEBI" id="CHEBI:133042"/>
        <dbReference type="EC" id="2.3.2.29"/>
    </reaction>
</comment>
<comment type="subcellular location">
    <subcellularLocation>
        <location evidence="1">Cytoplasm</location>
    </subcellularLocation>
</comment>
<comment type="similarity">
    <text evidence="1">Belongs to the R-transferase family. Bpt subfamily.</text>
</comment>
<evidence type="ECO:0000255" key="1">
    <source>
        <dbReference type="HAMAP-Rule" id="MF_00689"/>
    </source>
</evidence>
<protein>
    <recommendedName>
        <fullName evidence="1">Aspartate/glutamate leucyltransferase</fullName>
        <ecNumber evidence="1">2.3.2.29</ecNumber>
    </recommendedName>
</protein>